<dbReference type="EC" id="1.2.1.41" evidence="1"/>
<dbReference type="EMBL" id="CP001099">
    <property type="protein sequence ID" value="ACF11963.1"/>
    <property type="molecule type" value="Genomic_DNA"/>
</dbReference>
<dbReference type="RefSeq" id="WP_012502796.1">
    <property type="nucleotide sequence ID" value="NC_011027.1"/>
</dbReference>
<dbReference type="SMR" id="B3QPW0"/>
<dbReference type="STRING" id="517417.Cpar_1565"/>
<dbReference type="KEGG" id="cpc:Cpar_1565"/>
<dbReference type="eggNOG" id="COG0014">
    <property type="taxonomic scope" value="Bacteria"/>
</dbReference>
<dbReference type="HOGENOM" id="CLU_030231_0_0_10"/>
<dbReference type="OrthoDB" id="9809970at2"/>
<dbReference type="UniPathway" id="UPA00098">
    <property type="reaction ID" value="UER00360"/>
</dbReference>
<dbReference type="Proteomes" id="UP000008811">
    <property type="component" value="Chromosome"/>
</dbReference>
<dbReference type="GO" id="GO:0005737">
    <property type="term" value="C:cytoplasm"/>
    <property type="evidence" value="ECO:0007669"/>
    <property type="project" value="UniProtKB-SubCell"/>
</dbReference>
<dbReference type="GO" id="GO:0004350">
    <property type="term" value="F:glutamate-5-semialdehyde dehydrogenase activity"/>
    <property type="evidence" value="ECO:0007669"/>
    <property type="project" value="UniProtKB-UniRule"/>
</dbReference>
<dbReference type="GO" id="GO:0050661">
    <property type="term" value="F:NADP binding"/>
    <property type="evidence" value="ECO:0007669"/>
    <property type="project" value="InterPro"/>
</dbReference>
<dbReference type="GO" id="GO:0055129">
    <property type="term" value="P:L-proline biosynthetic process"/>
    <property type="evidence" value="ECO:0007669"/>
    <property type="project" value="UniProtKB-UniRule"/>
</dbReference>
<dbReference type="CDD" id="cd07079">
    <property type="entry name" value="ALDH_F18-19_ProA-GPR"/>
    <property type="match status" value="1"/>
</dbReference>
<dbReference type="Gene3D" id="3.40.605.10">
    <property type="entry name" value="Aldehyde Dehydrogenase, Chain A, domain 1"/>
    <property type="match status" value="1"/>
</dbReference>
<dbReference type="Gene3D" id="3.40.309.10">
    <property type="entry name" value="Aldehyde Dehydrogenase, Chain A, domain 2"/>
    <property type="match status" value="1"/>
</dbReference>
<dbReference type="HAMAP" id="MF_00412">
    <property type="entry name" value="ProA"/>
    <property type="match status" value="1"/>
</dbReference>
<dbReference type="InterPro" id="IPR016161">
    <property type="entry name" value="Ald_DH/histidinol_DH"/>
</dbReference>
<dbReference type="InterPro" id="IPR016163">
    <property type="entry name" value="Ald_DH_C"/>
</dbReference>
<dbReference type="InterPro" id="IPR016162">
    <property type="entry name" value="Ald_DH_N"/>
</dbReference>
<dbReference type="InterPro" id="IPR015590">
    <property type="entry name" value="Aldehyde_DH_dom"/>
</dbReference>
<dbReference type="InterPro" id="IPR020593">
    <property type="entry name" value="G-glutamylP_reductase_CS"/>
</dbReference>
<dbReference type="InterPro" id="IPR012134">
    <property type="entry name" value="Glu-5-SA_DH"/>
</dbReference>
<dbReference type="InterPro" id="IPR000965">
    <property type="entry name" value="GPR_dom"/>
</dbReference>
<dbReference type="NCBIfam" id="NF001221">
    <property type="entry name" value="PRK00197.1"/>
    <property type="match status" value="1"/>
</dbReference>
<dbReference type="NCBIfam" id="TIGR00407">
    <property type="entry name" value="proA"/>
    <property type="match status" value="1"/>
</dbReference>
<dbReference type="PANTHER" id="PTHR11063:SF8">
    <property type="entry name" value="DELTA-1-PYRROLINE-5-CARBOXYLATE SYNTHASE"/>
    <property type="match status" value="1"/>
</dbReference>
<dbReference type="PANTHER" id="PTHR11063">
    <property type="entry name" value="GLUTAMATE SEMIALDEHYDE DEHYDROGENASE"/>
    <property type="match status" value="1"/>
</dbReference>
<dbReference type="Pfam" id="PF00171">
    <property type="entry name" value="Aldedh"/>
    <property type="match status" value="1"/>
</dbReference>
<dbReference type="PIRSF" id="PIRSF000151">
    <property type="entry name" value="GPR"/>
    <property type="match status" value="1"/>
</dbReference>
<dbReference type="SUPFAM" id="SSF53720">
    <property type="entry name" value="ALDH-like"/>
    <property type="match status" value="1"/>
</dbReference>
<dbReference type="PROSITE" id="PS01223">
    <property type="entry name" value="PROA"/>
    <property type="match status" value="1"/>
</dbReference>
<comment type="function">
    <text evidence="1">Catalyzes the NADPH-dependent reduction of L-glutamate 5-phosphate into L-glutamate 5-semialdehyde and phosphate. The product spontaneously undergoes cyclization to form 1-pyrroline-5-carboxylate.</text>
</comment>
<comment type="catalytic activity">
    <reaction evidence="1">
        <text>L-glutamate 5-semialdehyde + phosphate + NADP(+) = L-glutamyl 5-phosphate + NADPH + H(+)</text>
        <dbReference type="Rhea" id="RHEA:19541"/>
        <dbReference type="ChEBI" id="CHEBI:15378"/>
        <dbReference type="ChEBI" id="CHEBI:43474"/>
        <dbReference type="ChEBI" id="CHEBI:57783"/>
        <dbReference type="ChEBI" id="CHEBI:58066"/>
        <dbReference type="ChEBI" id="CHEBI:58274"/>
        <dbReference type="ChEBI" id="CHEBI:58349"/>
        <dbReference type="EC" id="1.2.1.41"/>
    </reaction>
</comment>
<comment type="pathway">
    <text evidence="1">Amino-acid biosynthesis; L-proline biosynthesis; L-glutamate 5-semialdehyde from L-glutamate: step 2/2.</text>
</comment>
<comment type="subcellular location">
    <subcellularLocation>
        <location evidence="1">Cytoplasm</location>
    </subcellularLocation>
</comment>
<comment type="similarity">
    <text evidence="1">Belongs to the gamma-glutamyl phosphate reductase family.</text>
</comment>
<accession>B3QPW0</accession>
<protein>
    <recommendedName>
        <fullName evidence="1">Gamma-glutamyl phosphate reductase</fullName>
        <shortName evidence="1">GPR</shortName>
        <ecNumber evidence="1">1.2.1.41</ecNumber>
    </recommendedName>
    <alternativeName>
        <fullName evidence="1">Glutamate-5-semialdehyde dehydrogenase</fullName>
    </alternativeName>
    <alternativeName>
        <fullName evidence="1">Glutamyl-gamma-semialdehyde dehydrogenase</fullName>
        <shortName evidence="1">GSA dehydrogenase</shortName>
    </alternativeName>
</protein>
<organism>
    <name type="scientific">Chlorobaculum parvum (strain DSM 263 / NCIMB 8327)</name>
    <name type="common">Chlorobium vibrioforme subsp. thiosulfatophilum</name>
    <dbReference type="NCBI Taxonomy" id="517417"/>
    <lineage>
        <taxon>Bacteria</taxon>
        <taxon>Pseudomonadati</taxon>
        <taxon>Chlorobiota</taxon>
        <taxon>Chlorobiia</taxon>
        <taxon>Chlorobiales</taxon>
        <taxon>Chlorobiaceae</taxon>
        <taxon>Chlorobaculum</taxon>
    </lineage>
</organism>
<proteinExistence type="inferred from homology"/>
<keyword id="KW-0028">Amino-acid biosynthesis</keyword>
<keyword id="KW-0963">Cytoplasm</keyword>
<keyword id="KW-0521">NADP</keyword>
<keyword id="KW-0560">Oxidoreductase</keyword>
<keyword id="KW-0641">Proline biosynthesis</keyword>
<sequence>MTEHEAIVQHLQAVQNASRKIVTLDEDAINALLNDLADRIPDAAETILEANRKDLERMDPADPRYDRLLLNESRLNSIASDLRNVAALPSPLDRVLEERTLPNGLELRKVSVPLGVIGIIYESRPNVTFDVFALCLKSGNATVLKGGSDAAFSNIAIVELIQTVIRDRGLDPEMIYLLPAEREAAHILLNAVGYIDVIIPRGSQALIDFARKHSTVPVIETGAGIVHTYFDESGDLAMGRDIIFNAKTRRPSVCNALDTLIVHKSRIDDLPVLVEQLEEKLVQIFADEPAYYKLLNRYPDELLQIATPENFGTEYLSLKMSIKTVETFEEALDHIAHHSSKHSEAIVASDQATIDAFMKRVDAAAVYANTSTAFTDGAQFGLGAEIGISTQKLHARGPMALKELCTYKWLIEGQGQVRPA</sequence>
<gene>
    <name evidence="1" type="primary">proA</name>
    <name type="ordered locus">Cpar_1565</name>
</gene>
<reference key="1">
    <citation type="submission" date="2008-06" db="EMBL/GenBank/DDBJ databases">
        <title>Complete sequence of Chlorobaculum parvum NCIB 8327.</title>
        <authorList>
            <consortium name="US DOE Joint Genome Institute"/>
            <person name="Lucas S."/>
            <person name="Copeland A."/>
            <person name="Lapidus A."/>
            <person name="Glavina del Rio T."/>
            <person name="Dalin E."/>
            <person name="Tice H."/>
            <person name="Bruce D."/>
            <person name="Goodwin L."/>
            <person name="Pitluck S."/>
            <person name="Schmutz J."/>
            <person name="Larimer F."/>
            <person name="Land M."/>
            <person name="Hauser L."/>
            <person name="Kyrpides N."/>
            <person name="Mikhailova N."/>
            <person name="Zhao F."/>
            <person name="Li T."/>
            <person name="Liu Z."/>
            <person name="Overmann J."/>
            <person name="Bryant D.A."/>
            <person name="Richardson P."/>
        </authorList>
    </citation>
    <scope>NUCLEOTIDE SEQUENCE [LARGE SCALE GENOMIC DNA]</scope>
    <source>
        <strain>DSM 263 / NCIMB 8327</strain>
    </source>
</reference>
<evidence type="ECO:0000255" key="1">
    <source>
        <dbReference type="HAMAP-Rule" id="MF_00412"/>
    </source>
</evidence>
<feature type="chain" id="PRO_1000193582" description="Gamma-glutamyl phosphate reductase">
    <location>
        <begin position="1"/>
        <end position="420"/>
    </location>
</feature>
<name>PROA_CHLP8</name>